<keyword id="KW-1015">Disulfide bond</keyword>
<keyword id="KW-0325">Glycoprotein</keyword>
<keyword id="KW-1199">Hemostasis impairing toxin</keyword>
<keyword id="KW-0964">Secreted</keyword>
<keyword id="KW-0732">Signal</keyword>
<keyword id="KW-0800">Toxin</keyword>
<protein>
    <recommendedName>
        <fullName>Snaclec 6</fullName>
    </recommendedName>
    <alternativeName>
        <fullName>C-type lectin 6</fullName>
        <shortName>CTL-6</shortName>
    </alternativeName>
</protein>
<organism>
    <name type="scientific">Bitis arietans</name>
    <name type="common">African puff adder</name>
    <dbReference type="NCBI Taxonomy" id="8692"/>
    <lineage>
        <taxon>Eukaryota</taxon>
        <taxon>Metazoa</taxon>
        <taxon>Chordata</taxon>
        <taxon>Craniata</taxon>
        <taxon>Vertebrata</taxon>
        <taxon>Euteleostomi</taxon>
        <taxon>Lepidosauria</taxon>
        <taxon>Squamata</taxon>
        <taxon>Bifurcata</taxon>
        <taxon>Unidentata</taxon>
        <taxon>Episquamata</taxon>
        <taxon>Toxicofera</taxon>
        <taxon>Serpentes</taxon>
        <taxon>Colubroidea</taxon>
        <taxon>Viperidae</taxon>
        <taxon>Viperinae</taxon>
        <taxon>Bitis</taxon>
    </lineage>
</organism>
<evidence type="ECO:0000250" key="1"/>
<evidence type="ECO:0000255" key="2"/>
<evidence type="ECO:0000255" key="3">
    <source>
        <dbReference type="PROSITE-ProRule" id="PRU00040"/>
    </source>
</evidence>
<evidence type="ECO:0000305" key="4"/>
<feature type="signal peptide" evidence="2">
    <location>
        <begin position="1"/>
        <end position="23"/>
    </location>
</feature>
<feature type="chain" id="PRO_0000355246" description="Snaclec 6">
    <location>
        <begin position="24"/>
        <end position="148"/>
    </location>
</feature>
<feature type="domain" description="C-type lectin" evidence="3">
    <location>
        <begin position="34"/>
        <end position="145"/>
    </location>
</feature>
<feature type="glycosylation site" description="N-linked (GlcNAc...) asparagine" evidence="2">
    <location>
        <position position="130"/>
    </location>
</feature>
<feature type="disulfide bond" description="Interchain" evidence="3">
    <location>
        <position position="26"/>
    </location>
</feature>
<feature type="disulfide bond" evidence="3">
    <location>
        <begin position="27"/>
        <end position="38"/>
    </location>
</feature>
<feature type="disulfide bond" evidence="3">
    <location>
        <begin position="55"/>
        <end position="144"/>
    </location>
</feature>
<feature type="disulfide bond" description="Interchain" evidence="3">
    <location>
        <position position="100"/>
    </location>
</feature>
<feature type="disulfide bond" evidence="3">
    <location>
        <begin position="121"/>
        <end position="136"/>
    </location>
</feature>
<dbReference type="EMBL" id="AY254328">
    <property type="protein sequence ID" value="AAQ01209.1"/>
    <property type="molecule type" value="mRNA"/>
</dbReference>
<dbReference type="SMR" id="Q6X5T2"/>
<dbReference type="GO" id="GO:0005576">
    <property type="term" value="C:extracellular region"/>
    <property type="evidence" value="ECO:0007669"/>
    <property type="project" value="UniProtKB-SubCell"/>
</dbReference>
<dbReference type="GO" id="GO:0090729">
    <property type="term" value="F:toxin activity"/>
    <property type="evidence" value="ECO:0007669"/>
    <property type="project" value="UniProtKB-KW"/>
</dbReference>
<dbReference type="FunFam" id="3.10.100.10:FF:000087">
    <property type="entry name" value="Snaclec rhodocetin subunit delta"/>
    <property type="match status" value="1"/>
</dbReference>
<dbReference type="Gene3D" id="3.10.100.10">
    <property type="entry name" value="Mannose-Binding Protein A, subunit A"/>
    <property type="match status" value="1"/>
</dbReference>
<dbReference type="InterPro" id="IPR001304">
    <property type="entry name" value="C-type_lectin-like"/>
</dbReference>
<dbReference type="InterPro" id="IPR016186">
    <property type="entry name" value="C-type_lectin-like/link_sf"/>
</dbReference>
<dbReference type="InterPro" id="IPR050111">
    <property type="entry name" value="C-type_lectin/snaclec_domain"/>
</dbReference>
<dbReference type="InterPro" id="IPR018378">
    <property type="entry name" value="C-type_lectin_CS"/>
</dbReference>
<dbReference type="InterPro" id="IPR016187">
    <property type="entry name" value="CTDL_fold"/>
</dbReference>
<dbReference type="PANTHER" id="PTHR22803">
    <property type="entry name" value="MANNOSE, PHOSPHOLIPASE, LECTIN RECEPTOR RELATED"/>
    <property type="match status" value="1"/>
</dbReference>
<dbReference type="Pfam" id="PF00059">
    <property type="entry name" value="Lectin_C"/>
    <property type="match status" value="1"/>
</dbReference>
<dbReference type="PRINTS" id="PR01504">
    <property type="entry name" value="PNCREATITSAP"/>
</dbReference>
<dbReference type="SMART" id="SM00034">
    <property type="entry name" value="CLECT"/>
    <property type="match status" value="1"/>
</dbReference>
<dbReference type="SUPFAM" id="SSF56436">
    <property type="entry name" value="C-type lectin-like"/>
    <property type="match status" value="1"/>
</dbReference>
<dbReference type="PROSITE" id="PS00615">
    <property type="entry name" value="C_TYPE_LECTIN_1"/>
    <property type="match status" value="1"/>
</dbReference>
<dbReference type="PROSITE" id="PS50041">
    <property type="entry name" value="C_TYPE_LECTIN_2"/>
    <property type="match status" value="1"/>
</dbReference>
<reference key="1">
    <citation type="journal article" date="2003" name="Gene">
        <title>Novel sequences encoding venom C-type lectins are conserved in phylogenetically and geographically distinct Echis and Bitis viper species.</title>
        <authorList>
            <person name="Harrison R.A."/>
            <person name="Oliver J."/>
            <person name="Hasson S.S."/>
            <person name="Bharati K."/>
            <person name="Theakston R.D.G."/>
        </authorList>
    </citation>
    <scope>NUCLEOTIDE SEQUENCE [MRNA]</scope>
    <source>
        <tissue>Venom gland</tissue>
    </source>
</reference>
<comment type="function">
    <text evidence="1">Interferes with one step of hemostasis (modulation of platelet aggregation, or coagulation cascade, for example).</text>
</comment>
<comment type="subunit">
    <text evidence="1">Heterodimer; disulfide-linked.</text>
</comment>
<comment type="subcellular location">
    <subcellularLocation>
        <location evidence="1">Secreted</location>
    </subcellularLocation>
</comment>
<comment type="tissue specificity">
    <text>Expressed by the venom gland.</text>
</comment>
<comment type="miscellaneous">
    <text>Shows greater sequence similarity to the beta than alpha subunits compared to other heterodimer snaclecs.</text>
</comment>
<comment type="similarity">
    <text evidence="4">Belongs to the snaclec family.</text>
</comment>
<sequence>MGRFIFVSFGLLVMFLSLSGTEAGVCCPFGWSGYDQNCYKAFEELMTWADAEKFCTQQHKGSHLLSLHNIAEADFVVKTTVSGSKDGVIWMGLSDVWNECNWGWTDGAQLDYKAWNVASNCFIFKTAENNWSRTDCSGTHNFVCKSPA</sequence>
<accession>Q6X5T2</accession>
<name>SL6_BITAR</name>
<proteinExistence type="evidence at transcript level"/>